<organism>
    <name type="scientific">Synechococcus sp. (strain ATCC 27144 / PCC 6301 / SAUG 1402/1)</name>
    <name type="common">Anacystis nidulans</name>
    <dbReference type="NCBI Taxonomy" id="269084"/>
    <lineage>
        <taxon>Bacteria</taxon>
        <taxon>Bacillati</taxon>
        <taxon>Cyanobacteriota</taxon>
        <taxon>Cyanophyceae</taxon>
        <taxon>Synechococcales</taxon>
        <taxon>Synechococcaceae</taxon>
        <taxon>Synechococcus</taxon>
    </lineage>
</organism>
<gene>
    <name evidence="1" type="primary">glyQ</name>
    <name type="ordered locus">syc1647_c</name>
</gene>
<evidence type="ECO:0000255" key="1">
    <source>
        <dbReference type="HAMAP-Rule" id="MF_00254"/>
    </source>
</evidence>
<reference key="1">
    <citation type="journal article" date="2007" name="Photosyn. Res.">
        <title>Complete nucleotide sequence of the freshwater unicellular cyanobacterium Synechococcus elongatus PCC 6301 chromosome: gene content and organization.</title>
        <authorList>
            <person name="Sugita C."/>
            <person name="Ogata K."/>
            <person name="Shikata M."/>
            <person name="Jikuya H."/>
            <person name="Takano J."/>
            <person name="Furumichi M."/>
            <person name="Kanehisa M."/>
            <person name="Omata T."/>
            <person name="Sugiura M."/>
            <person name="Sugita M."/>
        </authorList>
    </citation>
    <scope>NUCLEOTIDE SEQUENCE [LARGE SCALE GENOMIC DNA]</scope>
    <source>
        <strain>ATCC 27144 / PCC 6301 / SAUG 1402/1</strain>
    </source>
</reference>
<name>SYGA_SYNP6</name>
<keyword id="KW-0030">Aminoacyl-tRNA synthetase</keyword>
<keyword id="KW-0067">ATP-binding</keyword>
<keyword id="KW-0963">Cytoplasm</keyword>
<keyword id="KW-0436">Ligase</keyword>
<keyword id="KW-0547">Nucleotide-binding</keyword>
<keyword id="KW-0648">Protein biosynthesis</keyword>
<protein>
    <recommendedName>
        <fullName evidence="1">Glycine--tRNA ligase alpha subunit</fullName>
        <ecNumber evidence="1">6.1.1.14</ecNumber>
    </recommendedName>
    <alternativeName>
        <fullName evidence="1">Glycyl-tRNA synthetase alpha subunit</fullName>
        <shortName evidence="1">GlyRS</shortName>
    </alternativeName>
</protein>
<comment type="catalytic activity">
    <reaction evidence="1">
        <text>tRNA(Gly) + glycine + ATP = glycyl-tRNA(Gly) + AMP + diphosphate</text>
        <dbReference type="Rhea" id="RHEA:16013"/>
        <dbReference type="Rhea" id="RHEA-COMP:9664"/>
        <dbReference type="Rhea" id="RHEA-COMP:9683"/>
        <dbReference type="ChEBI" id="CHEBI:30616"/>
        <dbReference type="ChEBI" id="CHEBI:33019"/>
        <dbReference type="ChEBI" id="CHEBI:57305"/>
        <dbReference type="ChEBI" id="CHEBI:78442"/>
        <dbReference type="ChEBI" id="CHEBI:78522"/>
        <dbReference type="ChEBI" id="CHEBI:456215"/>
        <dbReference type="EC" id="6.1.1.14"/>
    </reaction>
</comment>
<comment type="subunit">
    <text evidence="1">Tetramer of two alpha and two beta subunits.</text>
</comment>
<comment type="subcellular location">
    <subcellularLocation>
        <location evidence="1">Cytoplasm</location>
    </subcellularLocation>
</comment>
<comment type="similarity">
    <text evidence="1">Belongs to the class-II aminoacyl-tRNA synthetase family.</text>
</comment>
<feature type="chain" id="PRO_1000047515" description="Glycine--tRNA ligase alpha subunit">
    <location>
        <begin position="1"/>
        <end position="292"/>
    </location>
</feature>
<sequence>MNFQSVIATLNQFWADRGCLIAQPYDTEKGAGTMNPHTFLRAIGPEPWAVAYVEPCRRPTDGRYGENPNRYQHYYQYQVLIKPSPEGIQETYLDSLRALGIQPEEHDIRFVEDNWESPTLGAWGVGWEVWLDGMEVAQFTYFQQCGGIDCRPVSIEITYGLERLAMYLQNVEAFTEIKWTDRLSYGDVHLQSEIEQCTYNFEASTPELLFQLFGLYEQEATQLIEKGLVHPSLDYVLKCSHSFNLLDARGLISVTERTRYIGRIRNMARQVAKLYLEQREQLGFPLLQKVTA</sequence>
<dbReference type="EC" id="6.1.1.14" evidence="1"/>
<dbReference type="EMBL" id="AP008231">
    <property type="protein sequence ID" value="BAD79837.1"/>
    <property type="molecule type" value="Genomic_DNA"/>
</dbReference>
<dbReference type="RefSeq" id="WP_011243957.1">
    <property type="nucleotide sequence ID" value="NC_006576.1"/>
</dbReference>
<dbReference type="SMR" id="Q5N1I3"/>
<dbReference type="KEGG" id="syc:syc1647_c"/>
<dbReference type="eggNOG" id="COG0752">
    <property type="taxonomic scope" value="Bacteria"/>
</dbReference>
<dbReference type="Proteomes" id="UP000001175">
    <property type="component" value="Chromosome"/>
</dbReference>
<dbReference type="GO" id="GO:0005829">
    <property type="term" value="C:cytosol"/>
    <property type="evidence" value="ECO:0007669"/>
    <property type="project" value="TreeGrafter"/>
</dbReference>
<dbReference type="GO" id="GO:0005524">
    <property type="term" value="F:ATP binding"/>
    <property type="evidence" value="ECO:0007669"/>
    <property type="project" value="UniProtKB-UniRule"/>
</dbReference>
<dbReference type="GO" id="GO:0004820">
    <property type="term" value="F:glycine-tRNA ligase activity"/>
    <property type="evidence" value="ECO:0007669"/>
    <property type="project" value="UniProtKB-UniRule"/>
</dbReference>
<dbReference type="GO" id="GO:0006426">
    <property type="term" value="P:glycyl-tRNA aminoacylation"/>
    <property type="evidence" value="ECO:0007669"/>
    <property type="project" value="UniProtKB-UniRule"/>
</dbReference>
<dbReference type="CDD" id="cd00733">
    <property type="entry name" value="GlyRS_alpha_core"/>
    <property type="match status" value="1"/>
</dbReference>
<dbReference type="FunFam" id="3.30.930.10:FF:000006">
    <property type="entry name" value="Glycine--tRNA ligase alpha subunit"/>
    <property type="match status" value="1"/>
</dbReference>
<dbReference type="Gene3D" id="3.30.930.10">
    <property type="entry name" value="Bira Bifunctional Protein, Domain 2"/>
    <property type="match status" value="1"/>
</dbReference>
<dbReference type="Gene3D" id="1.20.58.180">
    <property type="entry name" value="Class II aaRS and biotin synthetases, domain 2"/>
    <property type="match status" value="1"/>
</dbReference>
<dbReference type="HAMAP" id="MF_00254">
    <property type="entry name" value="Gly_tRNA_synth_alpha"/>
    <property type="match status" value="1"/>
</dbReference>
<dbReference type="InterPro" id="IPR045864">
    <property type="entry name" value="aa-tRNA-synth_II/BPL/LPL"/>
</dbReference>
<dbReference type="InterPro" id="IPR006194">
    <property type="entry name" value="Gly-tRNA-synth_heterodimer"/>
</dbReference>
<dbReference type="InterPro" id="IPR002310">
    <property type="entry name" value="Gly-tRNA_ligase_asu"/>
</dbReference>
<dbReference type="NCBIfam" id="TIGR00388">
    <property type="entry name" value="glyQ"/>
    <property type="match status" value="1"/>
</dbReference>
<dbReference type="NCBIfam" id="NF006827">
    <property type="entry name" value="PRK09348.1"/>
    <property type="match status" value="1"/>
</dbReference>
<dbReference type="PANTHER" id="PTHR30075:SF2">
    <property type="entry name" value="GLYCINE--TRNA LIGASE, CHLOROPLASTIC_MITOCHONDRIAL 2"/>
    <property type="match status" value="1"/>
</dbReference>
<dbReference type="PANTHER" id="PTHR30075">
    <property type="entry name" value="GLYCYL-TRNA SYNTHETASE"/>
    <property type="match status" value="1"/>
</dbReference>
<dbReference type="Pfam" id="PF02091">
    <property type="entry name" value="tRNA-synt_2e"/>
    <property type="match status" value="1"/>
</dbReference>
<dbReference type="PRINTS" id="PR01044">
    <property type="entry name" value="TRNASYNTHGA"/>
</dbReference>
<dbReference type="SUPFAM" id="SSF55681">
    <property type="entry name" value="Class II aaRS and biotin synthetases"/>
    <property type="match status" value="1"/>
</dbReference>
<dbReference type="PROSITE" id="PS50861">
    <property type="entry name" value="AA_TRNA_LIGASE_II_GLYAB"/>
    <property type="match status" value="1"/>
</dbReference>
<proteinExistence type="inferred from homology"/>
<accession>Q5N1I3</accession>